<comment type="function">
    <text evidence="2">ATP-dependent protein-folding chaperone for the eIF2 complex. Binds to the gamma subunit of the eIF2 complex which allows the subunit to assemble with the alpha and beta subunits.</text>
</comment>
<comment type="subcellular location">
    <subcellularLocation>
        <location evidence="2">Cytoplasm</location>
    </subcellularLocation>
</comment>
<comment type="similarity">
    <text evidence="4">Belongs to the CDC123 family.</text>
</comment>
<dbReference type="EMBL" id="CH981529">
    <property type="protein sequence ID" value="EDK46005.1"/>
    <property type="molecule type" value="Genomic_DNA"/>
</dbReference>
<dbReference type="RefSeq" id="XP_001524214.1">
    <property type="nucleotide sequence ID" value="XM_001524164.1"/>
</dbReference>
<dbReference type="SMR" id="A5E3J7"/>
<dbReference type="FunCoup" id="A5E3J7">
    <property type="interactions" value="730"/>
</dbReference>
<dbReference type="STRING" id="379508.A5E3J7"/>
<dbReference type="GeneID" id="5231742"/>
<dbReference type="KEGG" id="lel:PVL30_003910"/>
<dbReference type="VEuPathDB" id="FungiDB:LELG_04184"/>
<dbReference type="eggNOG" id="KOG2983">
    <property type="taxonomic scope" value="Eukaryota"/>
</dbReference>
<dbReference type="HOGENOM" id="CLU_034402_2_0_1"/>
<dbReference type="InParanoid" id="A5E3J7"/>
<dbReference type="OMA" id="SGVIMEM"/>
<dbReference type="OrthoDB" id="360540at2759"/>
<dbReference type="Proteomes" id="UP000001996">
    <property type="component" value="Unassembled WGS sequence"/>
</dbReference>
<dbReference type="GO" id="GO:0005737">
    <property type="term" value="C:cytoplasm"/>
    <property type="evidence" value="ECO:0000250"/>
    <property type="project" value="UniProtKB"/>
</dbReference>
<dbReference type="GO" id="GO:0005524">
    <property type="term" value="F:ATP binding"/>
    <property type="evidence" value="ECO:0000250"/>
    <property type="project" value="UniProtKB"/>
</dbReference>
<dbReference type="GO" id="GO:0000287">
    <property type="term" value="F:magnesium ion binding"/>
    <property type="evidence" value="ECO:0000250"/>
    <property type="project" value="UniProtKB"/>
</dbReference>
<dbReference type="GO" id="GO:0044183">
    <property type="term" value="F:protein folding chaperone"/>
    <property type="evidence" value="ECO:0000250"/>
    <property type="project" value="UniProtKB"/>
</dbReference>
<dbReference type="GO" id="GO:1905143">
    <property type="term" value="P:eukaryotic translation initiation factor 2 complex assembly"/>
    <property type="evidence" value="ECO:0000250"/>
    <property type="project" value="UniProtKB"/>
</dbReference>
<dbReference type="InterPro" id="IPR009772">
    <property type="entry name" value="CDC123"/>
</dbReference>
<dbReference type="PANTHER" id="PTHR15323:SF6">
    <property type="entry name" value="CELL DIVISION CYCLE PROTEIN 123 HOMOLOG"/>
    <property type="match status" value="1"/>
</dbReference>
<dbReference type="PANTHER" id="PTHR15323">
    <property type="entry name" value="D123 PROTEIN"/>
    <property type="match status" value="1"/>
</dbReference>
<dbReference type="Pfam" id="PF07065">
    <property type="entry name" value="D123"/>
    <property type="match status" value="1"/>
</dbReference>
<accession>A5E3J7</accession>
<feature type="chain" id="PRO_0000350945" description="Translation initiation factor eIF2 assembly protein">
    <location>
        <begin position="1"/>
        <end position="387"/>
    </location>
</feature>
<feature type="binding site" evidence="1">
    <location>
        <position position="135"/>
    </location>
    <ligand>
        <name>ATP</name>
        <dbReference type="ChEBI" id="CHEBI:30616"/>
    </ligand>
</feature>
<feature type="binding site" evidence="1">
    <location>
        <position position="138"/>
    </location>
    <ligand>
        <name>ATP</name>
        <dbReference type="ChEBI" id="CHEBI:30616"/>
    </ligand>
</feature>
<feature type="binding site" evidence="3">
    <location>
        <position position="140"/>
    </location>
    <ligand>
        <name>ATP</name>
        <dbReference type="ChEBI" id="CHEBI:30616"/>
    </ligand>
</feature>
<feature type="binding site" evidence="3">
    <location>
        <position position="142"/>
    </location>
    <ligand>
        <name>ATP</name>
        <dbReference type="ChEBI" id="CHEBI:30616"/>
    </ligand>
</feature>
<feature type="binding site" evidence="3">
    <location>
        <position position="207"/>
    </location>
    <ligand>
        <name>ATP</name>
        <dbReference type="ChEBI" id="CHEBI:30616"/>
    </ligand>
</feature>
<feature type="binding site" evidence="3">
    <location>
        <position position="209"/>
    </location>
    <ligand>
        <name>ATP</name>
        <dbReference type="ChEBI" id="CHEBI:30616"/>
    </ligand>
</feature>
<feature type="binding site" evidence="1">
    <location>
        <position position="217"/>
    </location>
    <ligand>
        <name>ATP</name>
        <dbReference type="ChEBI" id="CHEBI:30616"/>
    </ligand>
</feature>
<feature type="binding site" evidence="1">
    <location>
        <position position="219"/>
    </location>
    <ligand>
        <name>ATP</name>
        <dbReference type="ChEBI" id="CHEBI:30616"/>
    </ligand>
</feature>
<feature type="binding site" evidence="1">
    <location>
        <position position="233"/>
    </location>
    <ligand>
        <name>ATP</name>
        <dbReference type="ChEBI" id="CHEBI:30616"/>
    </ligand>
</feature>
<feature type="binding site" evidence="3">
    <location>
        <position position="277"/>
    </location>
    <ligand>
        <name>ATP</name>
        <dbReference type="ChEBI" id="CHEBI:30616"/>
    </ligand>
</feature>
<feature type="binding site" evidence="1">
    <location>
        <position position="291"/>
    </location>
    <ligand>
        <name>ATP</name>
        <dbReference type="ChEBI" id="CHEBI:30616"/>
    </ligand>
</feature>
<feature type="binding site" evidence="1">
    <location>
        <position position="291"/>
    </location>
    <ligand>
        <name>Mg(2+)</name>
        <dbReference type="ChEBI" id="CHEBI:18420"/>
    </ligand>
</feature>
<feature type="binding site" evidence="1">
    <location>
        <position position="293"/>
    </location>
    <ligand>
        <name>ATP</name>
        <dbReference type="ChEBI" id="CHEBI:30616"/>
    </ligand>
</feature>
<feature type="binding site" evidence="1">
    <location>
        <position position="293"/>
    </location>
    <ligand>
        <name>Mg(2+)</name>
        <dbReference type="ChEBI" id="CHEBI:18420"/>
    </ligand>
</feature>
<reference key="1">
    <citation type="journal article" date="2009" name="Nature">
        <title>Evolution of pathogenicity and sexual reproduction in eight Candida genomes.</title>
        <authorList>
            <person name="Butler G."/>
            <person name="Rasmussen M.D."/>
            <person name="Lin M.F."/>
            <person name="Santos M.A.S."/>
            <person name="Sakthikumar S."/>
            <person name="Munro C.A."/>
            <person name="Rheinbay E."/>
            <person name="Grabherr M."/>
            <person name="Forche A."/>
            <person name="Reedy J.L."/>
            <person name="Agrafioti I."/>
            <person name="Arnaud M.B."/>
            <person name="Bates S."/>
            <person name="Brown A.J.P."/>
            <person name="Brunke S."/>
            <person name="Costanzo M.C."/>
            <person name="Fitzpatrick D.A."/>
            <person name="de Groot P.W.J."/>
            <person name="Harris D."/>
            <person name="Hoyer L.L."/>
            <person name="Hube B."/>
            <person name="Klis F.M."/>
            <person name="Kodira C."/>
            <person name="Lennard N."/>
            <person name="Logue M.E."/>
            <person name="Martin R."/>
            <person name="Neiman A.M."/>
            <person name="Nikolaou E."/>
            <person name="Quail M.A."/>
            <person name="Quinn J."/>
            <person name="Santos M.C."/>
            <person name="Schmitzberger F.F."/>
            <person name="Sherlock G."/>
            <person name="Shah P."/>
            <person name="Silverstein K.A.T."/>
            <person name="Skrzypek M.S."/>
            <person name="Soll D."/>
            <person name="Staggs R."/>
            <person name="Stansfield I."/>
            <person name="Stumpf M.P.H."/>
            <person name="Sudbery P.E."/>
            <person name="Srikantha T."/>
            <person name="Zeng Q."/>
            <person name="Berman J."/>
            <person name="Berriman M."/>
            <person name="Heitman J."/>
            <person name="Gow N.A.R."/>
            <person name="Lorenz M.C."/>
            <person name="Birren B.W."/>
            <person name="Kellis M."/>
            <person name="Cuomo C.A."/>
        </authorList>
    </citation>
    <scope>NUCLEOTIDE SEQUENCE [LARGE SCALE GENOMIC DNA]</scope>
    <source>
        <strain>ATCC 11503 / BCRC 21390 / CBS 2605 / JCM 1781 / NBRC 1676 / NRRL YB-4239</strain>
    </source>
</reference>
<evidence type="ECO:0000250" key="1">
    <source>
        <dbReference type="UniProtKB" id="O75794"/>
    </source>
</evidence>
<evidence type="ECO:0000250" key="2">
    <source>
        <dbReference type="UniProtKB" id="Q05791"/>
    </source>
</evidence>
<evidence type="ECO:0000250" key="3">
    <source>
        <dbReference type="UniProtKB" id="Q9P7N5"/>
    </source>
</evidence>
<evidence type="ECO:0000305" key="4"/>
<protein>
    <recommendedName>
        <fullName evidence="4">Translation initiation factor eIF2 assembly protein</fullName>
    </recommendedName>
    <alternativeName>
        <fullName>Cell division cycle protein 123</fullName>
    </alternativeName>
</protein>
<sequence length="387" mass="44343">MTDYAKFEEIDLTVEEVLNCSFSKWAPLFPKNVFPYKIIAPLPDGFIDYVQSDGIKLPSAKTNKIVLEQNSDNEYSDWEDVEDIENDTGEVEEMHSESQKNYEEKEVLEASGHFPQLNQEITQSIAELGGKVIPKLNWSSPKDASWLMPGNVIKCTEVDDVLLLLKSSDHVIDDLAYPFLEVSQLPEDETRKNGQDRIKVDYELVLKQWRDLNPALEFRVFVKEGKILGISQRDLNHYDFLKELEPQLKENIQLFVTDKVVNKLNASLPNLTKFIVDVYVPRPFDKIYIIDINPFLRKSDSLLFTWNELLTADPDSDTVPFRLINETNVGAFAKKQYSESQVPLDVIGAAQDHEALIELAKEWEKLQSKEAEEEDEAVVVDGVIEEK</sequence>
<gene>
    <name type="primary">CDC123</name>
    <name type="ORF">LELG_04184</name>
</gene>
<organism>
    <name type="scientific">Lodderomyces elongisporus (strain ATCC 11503 / CBS 2605 / JCM 1781 / NBRC 1676 / NRRL YB-4239)</name>
    <name type="common">Yeast</name>
    <name type="synonym">Saccharomyces elongisporus</name>
    <dbReference type="NCBI Taxonomy" id="379508"/>
    <lineage>
        <taxon>Eukaryota</taxon>
        <taxon>Fungi</taxon>
        <taxon>Dikarya</taxon>
        <taxon>Ascomycota</taxon>
        <taxon>Saccharomycotina</taxon>
        <taxon>Pichiomycetes</taxon>
        <taxon>Debaryomycetaceae</taxon>
        <taxon>Candida/Lodderomyces clade</taxon>
        <taxon>Lodderomyces</taxon>
    </lineage>
</organism>
<keyword id="KW-0067">ATP-binding</keyword>
<keyword id="KW-0143">Chaperone</keyword>
<keyword id="KW-0963">Cytoplasm</keyword>
<keyword id="KW-0460">Magnesium</keyword>
<keyword id="KW-0479">Metal-binding</keyword>
<keyword id="KW-0547">Nucleotide-binding</keyword>
<keyword id="KW-1185">Reference proteome</keyword>
<name>CD123_LODEL</name>
<proteinExistence type="inferred from homology"/>